<comment type="function">
    <text evidence="1">Converts the preformed base xanthine, a product of nucleic acid breakdown, to xanthosine 5'-monophosphate (XMP), so it can be reused for RNA or DNA synthesis.</text>
</comment>
<comment type="catalytic activity">
    <reaction evidence="1">
        <text>XMP + diphosphate = xanthine + 5-phospho-alpha-D-ribose 1-diphosphate</text>
        <dbReference type="Rhea" id="RHEA:10800"/>
        <dbReference type="ChEBI" id="CHEBI:17712"/>
        <dbReference type="ChEBI" id="CHEBI:33019"/>
        <dbReference type="ChEBI" id="CHEBI:57464"/>
        <dbReference type="ChEBI" id="CHEBI:58017"/>
        <dbReference type="EC" id="2.4.2.22"/>
    </reaction>
</comment>
<comment type="pathway">
    <text evidence="1">Purine metabolism; XMP biosynthesis via salvage pathway; XMP from xanthine: step 1/1.</text>
</comment>
<comment type="subunit">
    <text evidence="1">Homodimer.</text>
</comment>
<comment type="subcellular location">
    <subcellularLocation>
        <location evidence="1">Cytoplasm</location>
    </subcellularLocation>
</comment>
<comment type="similarity">
    <text evidence="1">Belongs to the purine/pyrimidine phosphoribosyltransferase family. Xpt subfamily.</text>
</comment>
<gene>
    <name evidence="1" type="primary">xpt1</name>
    <name type="ordered locus">CBO0317</name>
    <name type="ordered locus">CLC_0375</name>
</gene>
<feature type="chain" id="PRO_0000339681" description="Xanthine phosphoribosyltransferase 1">
    <location>
        <begin position="1"/>
        <end position="190"/>
    </location>
</feature>
<feature type="binding site" evidence="1">
    <location>
        <position position="20"/>
    </location>
    <ligand>
        <name>xanthine</name>
        <dbReference type="ChEBI" id="CHEBI:17712"/>
    </ligand>
</feature>
<feature type="binding site" evidence="1">
    <location>
        <position position="27"/>
    </location>
    <ligand>
        <name>xanthine</name>
        <dbReference type="ChEBI" id="CHEBI:17712"/>
    </ligand>
</feature>
<feature type="binding site" evidence="1">
    <location>
        <begin position="128"/>
        <end position="132"/>
    </location>
    <ligand>
        <name>5-phospho-alpha-D-ribose 1-diphosphate</name>
        <dbReference type="ChEBI" id="CHEBI:58017"/>
    </ligand>
</feature>
<feature type="binding site" evidence="1">
    <location>
        <position position="156"/>
    </location>
    <ligand>
        <name>xanthine</name>
        <dbReference type="ChEBI" id="CHEBI:17712"/>
    </ligand>
</feature>
<accession>A5HYL0</accession>
<accession>A7G0L5</accession>
<organism>
    <name type="scientific">Clostridium botulinum (strain Hall / ATCC 3502 / NCTC 13319 / Type A)</name>
    <dbReference type="NCBI Taxonomy" id="441771"/>
    <lineage>
        <taxon>Bacteria</taxon>
        <taxon>Bacillati</taxon>
        <taxon>Bacillota</taxon>
        <taxon>Clostridia</taxon>
        <taxon>Eubacteriales</taxon>
        <taxon>Clostridiaceae</taxon>
        <taxon>Clostridium</taxon>
    </lineage>
</organism>
<reference key="1">
    <citation type="journal article" date="2007" name="Genome Res.">
        <title>Genome sequence of a proteolytic (Group I) Clostridium botulinum strain Hall A and comparative analysis of the clostridial genomes.</title>
        <authorList>
            <person name="Sebaihia M."/>
            <person name="Peck M.W."/>
            <person name="Minton N.P."/>
            <person name="Thomson N.R."/>
            <person name="Holden M.T.G."/>
            <person name="Mitchell W.J."/>
            <person name="Carter A.T."/>
            <person name="Bentley S.D."/>
            <person name="Mason D.R."/>
            <person name="Crossman L."/>
            <person name="Paul C.J."/>
            <person name="Ivens A."/>
            <person name="Wells-Bennik M.H.J."/>
            <person name="Davis I.J."/>
            <person name="Cerdeno-Tarraga A.M."/>
            <person name="Churcher C."/>
            <person name="Quail M.A."/>
            <person name="Chillingworth T."/>
            <person name="Feltwell T."/>
            <person name="Fraser A."/>
            <person name="Goodhead I."/>
            <person name="Hance Z."/>
            <person name="Jagels K."/>
            <person name="Larke N."/>
            <person name="Maddison M."/>
            <person name="Moule S."/>
            <person name="Mungall K."/>
            <person name="Norbertczak H."/>
            <person name="Rabbinowitsch E."/>
            <person name="Sanders M."/>
            <person name="Simmonds M."/>
            <person name="White B."/>
            <person name="Whithead S."/>
            <person name="Parkhill J."/>
        </authorList>
    </citation>
    <scope>NUCLEOTIDE SEQUENCE [LARGE SCALE GENOMIC DNA]</scope>
    <source>
        <strain>Hall / ATCC 3502 / NCTC 13319 / Type A</strain>
    </source>
</reference>
<reference key="2">
    <citation type="journal article" date="2007" name="PLoS ONE">
        <title>Analysis of the neurotoxin complex genes in Clostridium botulinum A1-A4 and B1 strains: BoNT/A3, /Ba4 and /B1 clusters are located within plasmids.</title>
        <authorList>
            <person name="Smith T.J."/>
            <person name="Hill K.K."/>
            <person name="Foley B.T."/>
            <person name="Detter J.C."/>
            <person name="Munk A.C."/>
            <person name="Bruce D.C."/>
            <person name="Doggett N.A."/>
            <person name="Smith L.A."/>
            <person name="Marks J.D."/>
            <person name="Xie G."/>
            <person name="Brettin T.S."/>
        </authorList>
    </citation>
    <scope>NUCLEOTIDE SEQUENCE [LARGE SCALE GENOMIC DNA]</scope>
    <source>
        <strain>Hall / ATCC 3502 / NCTC 13319 / Type A</strain>
    </source>
</reference>
<sequence>MEKLQNRILQEGHALSETVLKVDSFLNHQVDPDLMYEIGTYFKNYFKEHKITKVFTIESSGIAPAVMTAMQMNLPMVILKKQASKILNGDVYQTTVHSFTKGLDYELTLSKKYIAKEDNILIIDDFLANGEAALGAARLVKEAGAKVAGMGIVIEKSFQPGRKMLEDKGYDVYSLARIAKLQKGLIEFVK</sequence>
<proteinExistence type="inferred from homology"/>
<keyword id="KW-0963">Cytoplasm</keyword>
<keyword id="KW-0328">Glycosyltransferase</keyword>
<keyword id="KW-0660">Purine salvage</keyword>
<keyword id="KW-1185">Reference proteome</keyword>
<keyword id="KW-0808">Transferase</keyword>
<protein>
    <recommendedName>
        <fullName evidence="1">Xanthine phosphoribosyltransferase 1</fullName>
        <shortName evidence="1">XPRTase 1</shortName>
        <ecNumber evidence="1">2.4.2.22</ecNumber>
    </recommendedName>
</protein>
<name>XPT1_CLOBH</name>
<evidence type="ECO:0000255" key="1">
    <source>
        <dbReference type="HAMAP-Rule" id="MF_01184"/>
    </source>
</evidence>
<dbReference type="EC" id="2.4.2.22" evidence="1"/>
<dbReference type="EMBL" id="CP000727">
    <property type="protein sequence ID" value="ABS39251.1"/>
    <property type="molecule type" value="Genomic_DNA"/>
</dbReference>
<dbReference type="EMBL" id="AM412317">
    <property type="protein sequence ID" value="CAL81869.1"/>
    <property type="molecule type" value="Genomic_DNA"/>
</dbReference>
<dbReference type="RefSeq" id="WP_011948106.1">
    <property type="nucleotide sequence ID" value="NC_009698.1"/>
</dbReference>
<dbReference type="RefSeq" id="YP_001252860.1">
    <property type="nucleotide sequence ID" value="NC_009495.1"/>
</dbReference>
<dbReference type="RefSeq" id="YP_001386270.1">
    <property type="nucleotide sequence ID" value="NC_009698.1"/>
</dbReference>
<dbReference type="SMR" id="A5HYL0"/>
<dbReference type="GeneID" id="5184572"/>
<dbReference type="KEGG" id="cbh:CLC_0375"/>
<dbReference type="KEGG" id="cbo:CBO0317"/>
<dbReference type="PATRIC" id="fig|413999.7.peg.317"/>
<dbReference type="HOGENOM" id="CLU_099015_0_0_9"/>
<dbReference type="UniPathway" id="UPA00602">
    <property type="reaction ID" value="UER00658"/>
</dbReference>
<dbReference type="PRO" id="PR:A5HYL0"/>
<dbReference type="Proteomes" id="UP000001986">
    <property type="component" value="Chromosome"/>
</dbReference>
<dbReference type="GO" id="GO:0005737">
    <property type="term" value="C:cytoplasm"/>
    <property type="evidence" value="ECO:0007669"/>
    <property type="project" value="UniProtKB-SubCell"/>
</dbReference>
<dbReference type="GO" id="GO:0000310">
    <property type="term" value="F:xanthine phosphoribosyltransferase activity"/>
    <property type="evidence" value="ECO:0007669"/>
    <property type="project" value="UniProtKB-UniRule"/>
</dbReference>
<dbReference type="GO" id="GO:0006166">
    <property type="term" value="P:purine ribonucleoside salvage"/>
    <property type="evidence" value="ECO:0007669"/>
    <property type="project" value="UniProtKB-KW"/>
</dbReference>
<dbReference type="GO" id="GO:0046110">
    <property type="term" value="P:xanthine metabolic process"/>
    <property type="evidence" value="ECO:0007669"/>
    <property type="project" value="InterPro"/>
</dbReference>
<dbReference type="GO" id="GO:0032265">
    <property type="term" value="P:XMP salvage"/>
    <property type="evidence" value="ECO:0007669"/>
    <property type="project" value="UniProtKB-UniRule"/>
</dbReference>
<dbReference type="CDD" id="cd06223">
    <property type="entry name" value="PRTases_typeI"/>
    <property type="match status" value="1"/>
</dbReference>
<dbReference type="Gene3D" id="3.40.50.2020">
    <property type="match status" value="1"/>
</dbReference>
<dbReference type="HAMAP" id="MF_01184">
    <property type="entry name" value="XPRTase"/>
    <property type="match status" value="1"/>
</dbReference>
<dbReference type="InterPro" id="IPR000836">
    <property type="entry name" value="PRibTrfase_dom"/>
</dbReference>
<dbReference type="InterPro" id="IPR029057">
    <property type="entry name" value="PRTase-like"/>
</dbReference>
<dbReference type="InterPro" id="IPR050118">
    <property type="entry name" value="Pur/Pyrimidine_PRTase"/>
</dbReference>
<dbReference type="InterPro" id="IPR010079">
    <property type="entry name" value="Xanthine_PRibTrfase"/>
</dbReference>
<dbReference type="NCBIfam" id="NF006671">
    <property type="entry name" value="PRK09219.1"/>
    <property type="match status" value="1"/>
</dbReference>
<dbReference type="NCBIfam" id="TIGR01744">
    <property type="entry name" value="XPRTase"/>
    <property type="match status" value="1"/>
</dbReference>
<dbReference type="PANTHER" id="PTHR43864">
    <property type="entry name" value="HYPOXANTHINE/GUANINE PHOSPHORIBOSYLTRANSFERASE"/>
    <property type="match status" value="1"/>
</dbReference>
<dbReference type="PANTHER" id="PTHR43864:SF1">
    <property type="entry name" value="XANTHINE PHOSPHORIBOSYLTRANSFERASE"/>
    <property type="match status" value="1"/>
</dbReference>
<dbReference type="Pfam" id="PF00156">
    <property type="entry name" value="Pribosyltran"/>
    <property type="match status" value="1"/>
</dbReference>
<dbReference type="SUPFAM" id="SSF53271">
    <property type="entry name" value="PRTase-like"/>
    <property type="match status" value="1"/>
</dbReference>